<gene>
    <name evidence="1" type="primary">TAH18</name>
    <name type="ordered locus">ADL306C</name>
</gene>
<protein>
    <recommendedName>
        <fullName evidence="1">NADPH-dependent diflavin oxidoreductase 1</fullName>
        <ecNumber evidence="1">1.18.1.-</ecNumber>
    </recommendedName>
    <alternativeName>
        <fullName evidence="1">NADPH-dependent FMN and FAD-containing oxidoreductase</fullName>
    </alternativeName>
</protein>
<accession>Q75B78</accession>
<reference key="1">
    <citation type="journal article" date="2004" name="Science">
        <title>The Ashbya gossypii genome as a tool for mapping the ancient Saccharomyces cerevisiae genome.</title>
        <authorList>
            <person name="Dietrich F.S."/>
            <person name="Voegeli S."/>
            <person name="Brachat S."/>
            <person name="Lerch A."/>
            <person name="Gates K."/>
            <person name="Steiner S."/>
            <person name="Mohr C."/>
            <person name="Poehlmann R."/>
            <person name="Luedi P."/>
            <person name="Choi S."/>
            <person name="Wing R.A."/>
            <person name="Flavier A."/>
            <person name="Gaffney T.D."/>
            <person name="Philippsen P."/>
        </authorList>
    </citation>
    <scope>NUCLEOTIDE SEQUENCE [LARGE SCALE GENOMIC DNA]</scope>
    <source>
        <strain>ATCC 10895 / CBS 109.51 / FGSC 9923 / NRRL Y-1056</strain>
    </source>
</reference>
<reference key="2">
    <citation type="journal article" date="2013" name="G3 (Bethesda)">
        <title>Genomes of Ashbya fungi isolated from insects reveal four mating-type loci, numerous translocations, lack of transposons, and distinct gene duplications.</title>
        <authorList>
            <person name="Dietrich F.S."/>
            <person name="Voegeli S."/>
            <person name="Kuo S."/>
            <person name="Philippsen P."/>
        </authorList>
    </citation>
    <scope>GENOME REANNOTATION</scope>
    <source>
        <strain>ATCC 10895 / CBS 109.51 / FGSC 9923 / NRRL Y-1056</strain>
    </source>
</reference>
<proteinExistence type="inferred from homology"/>
<dbReference type="EC" id="1.18.1.-" evidence="1"/>
<dbReference type="EMBL" id="AE016817">
    <property type="protein sequence ID" value="AAS51614.1"/>
    <property type="molecule type" value="Genomic_DNA"/>
</dbReference>
<dbReference type="RefSeq" id="NP_983790.1">
    <property type="nucleotide sequence ID" value="NM_209143.2"/>
</dbReference>
<dbReference type="SMR" id="Q75B78"/>
<dbReference type="FunCoup" id="Q75B78">
    <property type="interactions" value="767"/>
</dbReference>
<dbReference type="STRING" id="284811.Q75B78"/>
<dbReference type="EnsemblFungi" id="AAS51614">
    <property type="protein sequence ID" value="AAS51614"/>
    <property type="gene ID" value="AGOS_ADL306C"/>
</dbReference>
<dbReference type="GeneID" id="4619925"/>
<dbReference type="KEGG" id="ago:AGOS_ADL306C"/>
<dbReference type="eggNOG" id="KOG1159">
    <property type="taxonomic scope" value="Eukaryota"/>
</dbReference>
<dbReference type="HOGENOM" id="CLU_001570_17_6_1"/>
<dbReference type="InParanoid" id="Q75B78"/>
<dbReference type="OMA" id="DIMSIPR"/>
<dbReference type="OrthoDB" id="1856718at2759"/>
<dbReference type="Proteomes" id="UP000000591">
    <property type="component" value="Chromosome IV"/>
</dbReference>
<dbReference type="GO" id="GO:0005829">
    <property type="term" value="C:cytosol"/>
    <property type="evidence" value="ECO:0000318"/>
    <property type="project" value="GO_Central"/>
</dbReference>
<dbReference type="GO" id="GO:0097361">
    <property type="term" value="C:cytosolic [4Fe-4S] assembly targeting complex"/>
    <property type="evidence" value="ECO:0007669"/>
    <property type="project" value="EnsemblFungi"/>
</dbReference>
<dbReference type="GO" id="GO:0005739">
    <property type="term" value="C:mitochondrion"/>
    <property type="evidence" value="ECO:0007669"/>
    <property type="project" value="UniProtKB-SubCell"/>
</dbReference>
<dbReference type="GO" id="GO:0050660">
    <property type="term" value="F:flavin adenine dinucleotide binding"/>
    <property type="evidence" value="ECO:0000318"/>
    <property type="project" value="GO_Central"/>
</dbReference>
<dbReference type="GO" id="GO:0010181">
    <property type="term" value="F:FMN binding"/>
    <property type="evidence" value="ECO:0000318"/>
    <property type="project" value="GO_Central"/>
</dbReference>
<dbReference type="GO" id="GO:0050661">
    <property type="term" value="F:NADP binding"/>
    <property type="evidence" value="ECO:0007669"/>
    <property type="project" value="UniProtKB-UniRule"/>
</dbReference>
<dbReference type="GO" id="GO:0003958">
    <property type="term" value="F:NADPH-hemoprotein reductase activity"/>
    <property type="evidence" value="ECO:0007669"/>
    <property type="project" value="InterPro"/>
</dbReference>
<dbReference type="GO" id="GO:0016491">
    <property type="term" value="F:oxidoreductase activity"/>
    <property type="evidence" value="ECO:0000318"/>
    <property type="project" value="GO_Central"/>
</dbReference>
<dbReference type="GO" id="GO:0034599">
    <property type="term" value="P:cellular response to oxidative stress"/>
    <property type="evidence" value="ECO:0007669"/>
    <property type="project" value="EnsemblFungi"/>
</dbReference>
<dbReference type="GO" id="GO:0016226">
    <property type="term" value="P:iron-sulfur cluster assembly"/>
    <property type="evidence" value="ECO:0007669"/>
    <property type="project" value="UniProtKB-UniRule"/>
</dbReference>
<dbReference type="GO" id="GO:0006809">
    <property type="term" value="P:nitric oxide biosynthetic process"/>
    <property type="evidence" value="ECO:0007669"/>
    <property type="project" value="EnsemblFungi"/>
</dbReference>
<dbReference type="GO" id="GO:0045429">
    <property type="term" value="P:positive regulation of nitric oxide biosynthetic process"/>
    <property type="evidence" value="ECO:0007669"/>
    <property type="project" value="EnsemblFungi"/>
</dbReference>
<dbReference type="FunFam" id="1.20.990.10:FF:000008">
    <property type="entry name" value="NADPH-dependent diflavin oxidoreductase 1"/>
    <property type="match status" value="1"/>
</dbReference>
<dbReference type="FunFam" id="3.40.50.360:FF:000056">
    <property type="entry name" value="NADPH-dependent diflavin oxidoreductase 1"/>
    <property type="match status" value="1"/>
</dbReference>
<dbReference type="FunFam" id="3.40.50.80:FF:000030">
    <property type="entry name" value="NADPH-dependent diflavin oxidoreductase 1"/>
    <property type="match status" value="1"/>
</dbReference>
<dbReference type="Gene3D" id="3.40.50.360">
    <property type="match status" value="1"/>
</dbReference>
<dbReference type="Gene3D" id="1.20.990.10">
    <property type="entry name" value="NADPH-cytochrome p450 Reductase, Chain A, domain 3"/>
    <property type="match status" value="1"/>
</dbReference>
<dbReference type="Gene3D" id="3.40.50.80">
    <property type="entry name" value="Nucleotide-binding domain of ferredoxin-NADP reductase (FNR) module"/>
    <property type="match status" value="1"/>
</dbReference>
<dbReference type="Gene3D" id="2.40.30.10">
    <property type="entry name" value="Translation factors"/>
    <property type="match status" value="1"/>
</dbReference>
<dbReference type="HAMAP" id="MF_03178">
    <property type="entry name" value="NDOR1"/>
    <property type="match status" value="1"/>
</dbReference>
<dbReference type="InterPro" id="IPR003097">
    <property type="entry name" value="CysJ-like_FAD-binding"/>
</dbReference>
<dbReference type="InterPro" id="IPR017927">
    <property type="entry name" value="FAD-bd_FR_type"/>
</dbReference>
<dbReference type="InterPro" id="IPR001094">
    <property type="entry name" value="Flavdoxin-like"/>
</dbReference>
<dbReference type="InterPro" id="IPR008254">
    <property type="entry name" value="Flavodoxin/NO_synth"/>
</dbReference>
<dbReference type="InterPro" id="IPR001709">
    <property type="entry name" value="Flavoprot_Pyr_Nucl_cyt_Rdtase"/>
</dbReference>
<dbReference type="InterPro" id="IPR029039">
    <property type="entry name" value="Flavoprotein-like_sf"/>
</dbReference>
<dbReference type="InterPro" id="IPR039261">
    <property type="entry name" value="FNR_nucleotide-bd"/>
</dbReference>
<dbReference type="InterPro" id="IPR023173">
    <property type="entry name" value="NADPH_Cyt_P450_Rdtase_alpha"/>
</dbReference>
<dbReference type="InterPro" id="IPR028879">
    <property type="entry name" value="NDOR1"/>
</dbReference>
<dbReference type="InterPro" id="IPR001433">
    <property type="entry name" value="OxRdtase_FAD/NAD-bd"/>
</dbReference>
<dbReference type="InterPro" id="IPR017938">
    <property type="entry name" value="Riboflavin_synthase-like_b-brl"/>
</dbReference>
<dbReference type="PANTHER" id="PTHR19384:SF10">
    <property type="entry name" value="NADPH-DEPENDENT DIFLAVIN OXIDOREDUCTASE 1"/>
    <property type="match status" value="1"/>
</dbReference>
<dbReference type="PANTHER" id="PTHR19384">
    <property type="entry name" value="NITRIC OXIDE SYNTHASE-RELATED"/>
    <property type="match status" value="1"/>
</dbReference>
<dbReference type="Pfam" id="PF00667">
    <property type="entry name" value="FAD_binding_1"/>
    <property type="match status" value="1"/>
</dbReference>
<dbReference type="Pfam" id="PF00258">
    <property type="entry name" value="Flavodoxin_1"/>
    <property type="match status" value="1"/>
</dbReference>
<dbReference type="Pfam" id="PF00175">
    <property type="entry name" value="NAD_binding_1"/>
    <property type="match status" value="1"/>
</dbReference>
<dbReference type="PRINTS" id="PR00369">
    <property type="entry name" value="FLAVODOXIN"/>
</dbReference>
<dbReference type="PRINTS" id="PR00371">
    <property type="entry name" value="FPNCR"/>
</dbReference>
<dbReference type="SUPFAM" id="SSF52343">
    <property type="entry name" value="Ferredoxin reductase-like, C-terminal NADP-linked domain"/>
    <property type="match status" value="1"/>
</dbReference>
<dbReference type="SUPFAM" id="SSF52218">
    <property type="entry name" value="Flavoproteins"/>
    <property type="match status" value="1"/>
</dbReference>
<dbReference type="SUPFAM" id="SSF63380">
    <property type="entry name" value="Riboflavin synthase domain-like"/>
    <property type="match status" value="1"/>
</dbReference>
<dbReference type="PROSITE" id="PS51384">
    <property type="entry name" value="FAD_FR"/>
    <property type="match status" value="1"/>
</dbReference>
<dbReference type="PROSITE" id="PS50902">
    <property type="entry name" value="FLAVODOXIN_LIKE"/>
    <property type="match status" value="1"/>
</dbReference>
<name>NDOR1_EREGS</name>
<comment type="function">
    <text evidence="1">NADPH-dependent reductase which is a central component of the cytosolic iron-sulfur (Fe-S) protein assembly (CIA) machinery. Transfers electrons from NADPH via its FAD and FMN prosthetic groups to the [2Fe-2S] cluster of DRE2, another key component of the CIA machinery. In turn, this reduced cluster provides electrons for assembly of cytosolic iron-sulfur cluster proteins. Positively controls H(2)O(2)-induced cell death.</text>
</comment>
<comment type="catalytic activity">
    <reaction evidence="1">
        <text>2 oxidized [2Fe-2S]-[protein] + NADPH = 2 reduced [2Fe-2S]-[protein] + NADP(+) + H(+)</text>
        <dbReference type="Rhea" id="RHEA:67716"/>
        <dbReference type="Rhea" id="RHEA-COMP:17327"/>
        <dbReference type="Rhea" id="RHEA-COMP:17328"/>
        <dbReference type="ChEBI" id="CHEBI:15378"/>
        <dbReference type="ChEBI" id="CHEBI:33737"/>
        <dbReference type="ChEBI" id="CHEBI:33738"/>
        <dbReference type="ChEBI" id="CHEBI:57783"/>
        <dbReference type="ChEBI" id="CHEBI:58349"/>
    </reaction>
    <physiologicalReaction direction="left-to-right" evidence="1">
        <dbReference type="Rhea" id="RHEA:67717"/>
    </physiologicalReaction>
</comment>
<comment type="cofactor">
    <cofactor evidence="1">
        <name>FAD</name>
        <dbReference type="ChEBI" id="CHEBI:57692"/>
    </cofactor>
</comment>
<comment type="cofactor">
    <cofactor evidence="1">
        <name>FMN</name>
        <dbReference type="ChEBI" id="CHEBI:58210"/>
    </cofactor>
</comment>
<comment type="subunit">
    <text evidence="1">Interacts with DRE2; as part of the cytosolic iron-sulfur (Fe-S) protein assembly (CIA) machinery.</text>
</comment>
<comment type="subcellular location">
    <subcellularLocation>
        <location evidence="1">Cytoplasm</location>
    </subcellularLocation>
    <subcellularLocation>
        <location evidence="1">Mitochondrion</location>
    </subcellularLocation>
    <text evidence="1">Relocalizes to mitochondria after H(2)O(2) exposure.</text>
</comment>
<comment type="similarity">
    <text evidence="1">Belongs to the NADPH-dependent diflavin oxidoreductase NDOR1 family.</text>
</comment>
<comment type="similarity">
    <text evidence="1">In the N-terminal section; belongs to the flavodoxin family.</text>
</comment>
<comment type="similarity">
    <text evidence="1">In the C-terminal section; belongs to the flavoprotein pyridine nucleotide cytochrome reductase family.</text>
</comment>
<evidence type="ECO:0000255" key="1">
    <source>
        <dbReference type="HAMAP-Rule" id="MF_03178"/>
    </source>
</evidence>
<keyword id="KW-0963">Cytoplasm</keyword>
<keyword id="KW-0274">FAD</keyword>
<keyword id="KW-0285">Flavoprotein</keyword>
<keyword id="KW-0288">FMN</keyword>
<keyword id="KW-0496">Mitochondrion</keyword>
<keyword id="KW-0521">NADP</keyword>
<keyword id="KW-0560">Oxidoreductase</keyword>
<keyword id="KW-1185">Reference proteome</keyword>
<feature type="chain" id="PRO_0000167612" description="NADPH-dependent diflavin oxidoreductase 1">
    <location>
        <begin position="1"/>
        <end position="620"/>
    </location>
</feature>
<feature type="domain" description="Flavodoxin-like" evidence="1">
    <location>
        <begin position="6"/>
        <end position="168"/>
    </location>
</feature>
<feature type="domain" description="FAD-binding FR-type" evidence="1">
    <location>
        <begin position="222"/>
        <end position="475"/>
    </location>
</feature>
<feature type="binding site" evidence="1">
    <location>
        <begin position="12"/>
        <end position="17"/>
    </location>
    <ligand>
        <name>FMN</name>
        <dbReference type="ChEBI" id="CHEBI:58210"/>
    </ligand>
</feature>
<feature type="binding site" evidence="1">
    <location>
        <begin position="59"/>
        <end position="62"/>
    </location>
    <ligand>
        <name>FMN</name>
        <dbReference type="ChEBI" id="CHEBI:58210"/>
    </ligand>
</feature>
<feature type="binding site" evidence="1">
    <location>
        <begin position="106"/>
        <end position="115"/>
    </location>
    <ligand>
        <name>FMN</name>
        <dbReference type="ChEBI" id="CHEBI:58210"/>
    </ligand>
</feature>
<feature type="binding site" evidence="1">
    <location>
        <position position="380"/>
    </location>
    <ligand>
        <name>FAD</name>
        <dbReference type="ChEBI" id="CHEBI:57692"/>
    </ligand>
</feature>
<feature type="binding site" evidence="1">
    <location>
        <begin position="410"/>
        <end position="413"/>
    </location>
    <ligand>
        <name>FAD</name>
        <dbReference type="ChEBI" id="CHEBI:57692"/>
    </ligand>
</feature>
<feature type="binding site" evidence="1">
    <location>
        <begin position="442"/>
        <end position="445"/>
    </location>
    <ligand>
        <name>FAD</name>
        <dbReference type="ChEBI" id="CHEBI:57692"/>
    </ligand>
</feature>
<feature type="binding site" evidence="1">
    <location>
        <begin position="535"/>
        <end position="536"/>
    </location>
    <ligand>
        <name>NADP(+)</name>
        <dbReference type="ChEBI" id="CHEBI:58349"/>
    </ligand>
</feature>
<feature type="binding site" evidence="1">
    <location>
        <position position="620"/>
    </location>
    <ligand>
        <name>FAD</name>
        <dbReference type="ChEBI" id="CHEBI:57692"/>
    </ligand>
</feature>
<organism>
    <name type="scientific">Eremothecium gossypii (strain ATCC 10895 / CBS 109.51 / FGSC 9923 / NRRL Y-1056)</name>
    <name type="common">Yeast</name>
    <name type="synonym">Ashbya gossypii</name>
    <dbReference type="NCBI Taxonomy" id="284811"/>
    <lineage>
        <taxon>Eukaryota</taxon>
        <taxon>Fungi</taxon>
        <taxon>Dikarya</taxon>
        <taxon>Ascomycota</taxon>
        <taxon>Saccharomycotina</taxon>
        <taxon>Saccharomycetes</taxon>
        <taxon>Saccharomycetales</taxon>
        <taxon>Saccharomycetaceae</taxon>
        <taxon>Eremothecium</taxon>
    </lineage>
</organism>
<sequence>MAATRIAILYGSETGTAQDFANILSHQLRRFHYKHTVCSIGEYSAQNILACQYLFVICSTTGQGALPQNARQSPQGKVEGTLWSVLKRSSLPPTLLDHLQVAFLGLGDSSYSKFNFAIRKLHNRIVGQLGAREIFPRLEADAIGLAGSNAGNGNGIELVYSEFEKRVLSFLNDQFPFMTVNGEQVPREPIATDIYLKPEYYLEASGNDKGTASVPCTFEGDSSVKYGTVVTNKRITATDHFQDVRQLVFSSQDGENYYPGDTVSIYPYNTDADVQAFIDTQQHWASIADVPLQIKTPTSARGICDGGLVSPLTLRNLLKYHCDIVSIPMRSFFMKTWTFAVDHERLPDGKDQLQQQRDKLREFAESEDMQDIYDYCNRPRRSILEVVQDFMSLRLPWEYILDYLPHIKPRFFSISSQPCNKDIELTIAIVRYKTILRRIRRGLCTNYISDLSEGSIIRYKVQYNDLLPAGKQDRPVIMISPGVGLAPMKCLIYAQLFNPMLLFFGNRYKDKDFLYADTLQKWADENRIKLFVCFSRSPDDSPGLKYVQDAVWENAREVARLITEENAVVYVCGSSGKMPVQVRLTLCEVLKKWGNFPDDKASEEYLKDMENSDRYLQETW</sequence>